<keyword id="KW-0479">Metal-binding</keyword>
<keyword id="KW-0480">Metal-thiolate cluster</keyword>
<keyword id="KW-1185">Reference proteome</keyword>
<keyword id="KW-0862">Zinc</keyword>
<name>MT_MELGA</name>
<dbReference type="EMBL" id="AF321983">
    <property type="protein sequence ID" value="AAG40324.1"/>
    <property type="molecule type" value="mRNA"/>
</dbReference>
<dbReference type="EMBL" id="X62513">
    <property type="status" value="NOT_ANNOTATED_CDS"/>
    <property type="molecule type" value="Genomic_DNA"/>
</dbReference>
<dbReference type="EMBL" id="X62514">
    <property type="protein sequence ID" value="CAA44372.1"/>
    <property type="molecule type" value="mRNA"/>
</dbReference>
<dbReference type="PIR" id="S33381">
    <property type="entry name" value="S33381"/>
</dbReference>
<dbReference type="SMR" id="P68498"/>
<dbReference type="FunCoup" id="P68498">
    <property type="interactions" value="7"/>
</dbReference>
<dbReference type="Ensembl" id="ENSMGAT00000000976.3">
    <property type="protein sequence ID" value="ENSMGAP00000000340.3"/>
    <property type="gene ID" value="ENSMGAG00000019337.1"/>
</dbReference>
<dbReference type="GeneTree" id="ENSGT00950000182967"/>
<dbReference type="InParanoid" id="P68498"/>
<dbReference type="Proteomes" id="UP000001645">
    <property type="component" value="Chromosome 13"/>
</dbReference>
<dbReference type="GO" id="GO:0005737">
    <property type="term" value="C:cytoplasm"/>
    <property type="evidence" value="ECO:0007669"/>
    <property type="project" value="TreeGrafter"/>
</dbReference>
<dbReference type="GO" id="GO:0005634">
    <property type="term" value="C:nucleus"/>
    <property type="evidence" value="ECO:0007669"/>
    <property type="project" value="TreeGrafter"/>
</dbReference>
<dbReference type="GO" id="GO:0008270">
    <property type="term" value="F:zinc ion binding"/>
    <property type="evidence" value="ECO:0000314"/>
    <property type="project" value="AgBase"/>
</dbReference>
<dbReference type="GO" id="GO:0071276">
    <property type="term" value="P:cellular response to cadmium ion"/>
    <property type="evidence" value="ECO:0007669"/>
    <property type="project" value="TreeGrafter"/>
</dbReference>
<dbReference type="GO" id="GO:0071280">
    <property type="term" value="P:cellular response to copper ion"/>
    <property type="evidence" value="ECO:0007669"/>
    <property type="project" value="TreeGrafter"/>
</dbReference>
<dbReference type="GO" id="GO:0071294">
    <property type="term" value="P:cellular response to zinc ion"/>
    <property type="evidence" value="ECO:0007669"/>
    <property type="project" value="TreeGrafter"/>
</dbReference>
<dbReference type="GO" id="GO:0010273">
    <property type="term" value="P:detoxification of copper ion"/>
    <property type="evidence" value="ECO:0007669"/>
    <property type="project" value="TreeGrafter"/>
</dbReference>
<dbReference type="GO" id="GO:0006882">
    <property type="term" value="P:intracellular zinc ion homeostasis"/>
    <property type="evidence" value="ECO:0007669"/>
    <property type="project" value="TreeGrafter"/>
</dbReference>
<dbReference type="GO" id="GO:0070555">
    <property type="term" value="P:response to interleukin-1"/>
    <property type="evidence" value="ECO:0000314"/>
    <property type="project" value="AgBase"/>
</dbReference>
<dbReference type="GO" id="GO:0032496">
    <property type="term" value="P:response to lipopolysaccharide"/>
    <property type="evidence" value="ECO:0000314"/>
    <property type="project" value="AgBase"/>
</dbReference>
<dbReference type="FunFam" id="4.10.10.10:FF:000001">
    <property type="entry name" value="Metallothionein"/>
    <property type="match status" value="1"/>
</dbReference>
<dbReference type="Gene3D" id="4.10.10.10">
    <property type="entry name" value="Metallothionein Isoform II"/>
    <property type="match status" value="1"/>
</dbReference>
<dbReference type="InterPro" id="IPR017854">
    <property type="entry name" value="Metalthion_dom_sf"/>
</dbReference>
<dbReference type="InterPro" id="IPR023587">
    <property type="entry name" value="Metalthion_dom_sf_vert"/>
</dbReference>
<dbReference type="InterPro" id="IPR000006">
    <property type="entry name" value="Metalthion_vert"/>
</dbReference>
<dbReference type="InterPro" id="IPR018064">
    <property type="entry name" value="Metalthion_vert_metal_BS"/>
</dbReference>
<dbReference type="PANTHER" id="PTHR23299">
    <property type="entry name" value="METALLOTHIONEIN"/>
    <property type="match status" value="1"/>
</dbReference>
<dbReference type="PANTHER" id="PTHR23299:SF24">
    <property type="entry name" value="METALLOTHIONEIN-1X"/>
    <property type="match status" value="1"/>
</dbReference>
<dbReference type="Pfam" id="PF00131">
    <property type="entry name" value="Metallothio"/>
    <property type="match status" value="1"/>
</dbReference>
<dbReference type="PRINTS" id="PR00860">
    <property type="entry name" value="MTVERTEBRATE"/>
</dbReference>
<dbReference type="SUPFAM" id="SSF57868">
    <property type="entry name" value="Metallothionein"/>
    <property type="match status" value="1"/>
</dbReference>
<dbReference type="PROSITE" id="PS00203">
    <property type="entry name" value="METALLOTHIONEIN_VRT"/>
    <property type="match status" value="1"/>
</dbReference>
<comment type="function">
    <text>Metallothioneins have a high content of cysteine residues that bind various heavy metals.</text>
</comment>
<comment type="domain">
    <text>Class I metallothioneins contain 2 metal-binding domains: four divalent ions are chelated within cluster A of the alpha domain and are coordinated via cysteinyl thiolate bridges to 11 cysteine ligands. Cluster B, the corresponding region within the beta domain, can ligate three divalent ions to 9 cysteines.</text>
</comment>
<comment type="similarity">
    <text evidence="2">Belongs to the metallothionein superfamily. Type 1 family.</text>
</comment>
<accession>P68498</accession>
<accession>P09576</accession>
<reference key="1">
    <citation type="submission" date="2000-11" db="EMBL/GenBank/DDBJ databases">
        <authorList>
            <person name="Richards M.P."/>
            <person name="Bevard M.V."/>
            <person name="Poch S.M."/>
        </authorList>
    </citation>
    <scope>NUCLEOTIDE SEQUENCE [MRNA]</scope>
    <source>
        <tissue>Liver</tissue>
    </source>
</reference>
<reference key="2">
    <citation type="journal article" date="1993" name="J. Mol. Evol.">
        <title>Evolution of avian metallothionein: DNA sequence analyses of the turkey metallothionein gene and metallothionein cDNAs from pheasant and quail.</title>
        <authorList>
            <person name="Shartzer K.L."/>
            <person name="Kage K."/>
            <person name="Sobieski R.J."/>
            <person name="Andrews G.K."/>
        </authorList>
    </citation>
    <scope>NUCLEOTIDE SEQUENCE [GENOMIC DNA / MRNA] OF 15-63</scope>
    <source>
        <tissue>Liver</tissue>
    </source>
</reference>
<sequence>MDPQDCTCAAGDSCSCAGSCKCKNCRCRSCRKSCCSCCPAGCNNCAKGCVCKEPASSKCSCCH</sequence>
<organism>
    <name type="scientific">Meleagris gallopavo</name>
    <name type="common">Wild turkey</name>
    <dbReference type="NCBI Taxonomy" id="9103"/>
    <lineage>
        <taxon>Eukaryota</taxon>
        <taxon>Metazoa</taxon>
        <taxon>Chordata</taxon>
        <taxon>Craniata</taxon>
        <taxon>Vertebrata</taxon>
        <taxon>Euteleostomi</taxon>
        <taxon>Archelosauria</taxon>
        <taxon>Archosauria</taxon>
        <taxon>Dinosauria</taxon>
        <taxon>Saurischia</taxon>
        <taxon>Theropoda</taxon>
        <taxon>Coelurosauria</taxon>
        <taxon>Aves</taxon>
        <taxon>Neognathae</taxon>
        <taxon>Galloanserae</taxon>
        <taxon>Galliformes</taxon>
        <taxon>Phasianidae</taxon>
        <taxon>Meleagridinae</taxon>
        <taxon>Meleagris</taxon>
    </lineage>
</organism>
<protein>
    <recommendedName>
        <fullName>Metallothionein</fullName>
        <shortName>MT</shortName>
    </recommendedName>
</protein>
<feature type="chain" id="PRO_0000197265" description="Metallothionein">
    <location>
        <begin position="1"/>
        <end position="63"/>
    </location>
</feature>
<feature type="region of interest" description="Beta">
    <location>
        <begin position="1"/>
        <end position="30"/>
    </location>
</feature>
<feature type="region of interest" description="Alpha">
    <location>
        <begin position="31"/>
        <end position="63"/>
    </location>
</feature>
<feature type="binding site" evidence="1">
    <location>
        <position position="6"/>
    </location>
    <ligand>
        <name>a divalent metal cation</name>
        <dbReference type="ChEBI" id="CHEBI:60240"/>
        <label>1</label>
        <note>in cluster B</note>
    </ligand>
</feature>
<feature type="binding site" evidence="1">
    <location>
        <position position="8"/>
    </location>
    <ligand>
        <name>a divalent metal cation</name>
        <dbReference type="ChEBI" id="CHEBI:60240"/>
        <label>1</label>
        <note>in cluster B</note>
    </ligand>
</feature>
<feature type="binding site" evidence="1">
    <location>
        <position position="8"/>
    </location>
    <ligand>
        <name>a divalent metal cation</name>
        <dbReference type="ChEBI" id="CHEBI:60240"/>
        <label>2</label>
        <note>in cluster B</note>
    </ligand>
</feature>
<feature type="binding site" evidence="1">
    <location>
        <position position="14"/>
    </location>
    <ligand>
        <name>a divalent metal cation</name>
        <dbReference type="ChEBI" id="CHEBI:60240"/>
        <label>2</label>
        <note>in cluster B</note>
    </ligand>
</feature>
<feature type="binding site" evidence="1">
    <location>
        <position position="16"/>
    </location>
    <ligand>
        <name>a divalent metal cation</name>
        <dbReference type="ChEBI" id="CHEBI:60240"/>
        <label>2</label>
        <note>in cluster B</note>
    </ligand>
</feature>
<feature type="binding site" evidence="1">
    <location>
        <position position="16"/>
    </location>
    <ligand>
        <name>a divalent metal cation</name>
        <dbReference type="ChEBI" id="CHEBI:60240"/>
        <label>3</label>
        <note>in cluster B</note>
    </ligand>
</feature>
<feature type="binding site" evidence="1">
    <location>
        <position position="20"/>
    </location>
    <ligand>
        <name>a divalent metal cation</name>
        <dbReference type="ChEBI" id="CHEBI:60240"/>
        <label>3</label>
        <note>in cluster B</note>
    </ligand>
</feature>
<feature type="binding site" evidence="1">
    <location>
        <position position="22"/>
    </location>
    <ligand>
        <name>a divalent metal cation</name>
        <dbReference type="ChEBI" id="CHEBI:60240"/>
        <label>1</label>
        <note>in cluster B</note>
    </ligand>
</feature>
<feature type="binding site" evidence="1">
    <location>
        <position position="25"/>
    </location>
    <ligand>
        <name>a divalent metal cation</name>
        <dbReference type="ChEBI" id="CHEBI:60240"/>
        <label>1</label>
        <note>in cluster B</note>
    </ligand>
</feature>
<feature type="binding site" evidence="1">
    <location>
        <position position="25"/>
    </location>
    <ligand>
        <name>a divalent metal cation</name>
        <dbReference type="ChEBI" id="CHEBI:60240"/>
        <label>3</label>
        <note>in cluster B</note>
    </ligand>
</feature>
<feature type="binding site" evidence="1">
    <location>
        <position position="27"/>
    </location>
    <ligand>
        <name>a divalent metal cation</name>
        <dbReference type="ChEBI" id="CHEBI:60240"/>
        <label>2</label>
        <note>in cluster B</note>
    </ligand>
</feature>
<feature type="binding site" evidence="1">
    <location>
        <position position="30"/>
    </location>
    <ligand>
        <name>a divalent metal cation</name>
        <dbReference type="ChEBI" id="CHEBI:60240"/>
        <label>3</label>
        <note>in cluster B</note>
    </ligand>
</feature>
<feature type="binding site" evidence="1">
    <location>
        <position position="34"/>
    </location>
    <ligand>
        <name>a divalent metal cation</name>
        <dbReference type="ChEBI" id="CHEBI:60240"/>
        <label>4</label>
        <note>in cluster A</note>
    </ligand>
</feature>
<feature type="binding site" evidence="1">
    <location>
        <position position="35"/>
    </location>
    <ligand>
        <name>a divalent metal cation</name>
        <dbReference type="ChEBI" id="CHEBI:60240"/>
        <label>4</label>
        <note>in cluster A</note>
    </ligand>
</feature>
<feature type="binding site" evidence="1">
    <location>
        <position position="35"/>
    </location>
    <ligand>
        <name>a divalent metal cation</name>
        <dbReference type="ChEBI" id="CHEBI:60240"/>
        <label>5</label>
        <note>in cluster A</note>
    </ligand>
</feature>
<feature type="binding site" evidence="1">
    <location>
        <position position="37"/>
    </location>
    <ligand>
        <name>a divalent metal cation</name>
        <dbReference type="ChEBI" id="CHEBI:60240"/>
        <label>5</label>
        <note>in cluster A</note>
    </ligand>
</feature>
<feature type="binding site" evidence="1">
    <location>
        <position position="38"/>
    </location>
    <ligand>
        <name>a divalent metal cation</name>
        <dbReference type="ChEBI" id="CHEBI:60240"/>
        <label>5</label>
        <note>in cluster A</note>
    </ligand>
</feature>
<feature type="binding site" evidence="1">
    <location>
        <position position="38"/>
    </location>
    <ligand>
        <name>a divalent metal cation</name>
        <dbReference type="ChEBI" id="CHEBI:60240"/>
        <label>6</label>
        <note>in cluster A</note>
    </ligand>
</feature>
<feature type="binding site" evidence="1">
    <location>
        <position position="42"/>
    </location>
    <ligand>
        <name>a divalent metal cation</name>
        <dbReference type="ChEBI" id="CHEBI:60240"/>
        <label>6</label>
        <note>in cluster A</note>
    </ligand>
</feature>
<feature type="binding site" evidence="1">
    <location>
        <position position="45"/>
    </location>
    <ligand>
        <name>a divalent metal cation</name>
        <dbReference type="ChEBI" id="CHEBI:60240"/>
        <label>4</label>
        <note>in cluster A</note>
    </ligand>
</feature>
<feature type="binding site" evidence="1">
    <location>
        <position position="45"/>
    </location>
    <ligand>
        <name>a divalent metal cation</name>
        <dbReference type="ChEBI" id="CHEBI:60240"/>
        <label>6</label>
        <note>in cluster A</note>
    </ligand>
</feature>
<feature type="binding site" evidence="1">
    <location>
        <position position="49"/>
    </location>
    <ligand>
        <name>a divalent metal cation</name>
        <dbReference type="ChEBI" id="CHEBI:60240"/>
        <label>4</label>
        <note>in cluster A</note>
    </ligand>
</feature>
<feature type="binding site" evidence="1">
    <location>
        <position position="51"/>
    </location>
    <ligand>
        <name>a divalent metal cation</name>
        <dbReference type="ChEBI" id="CHEBI:60240"/>
        <label>5</label>
        <note>in cluster A</note>
    </ligand>
</feature>
<feature type="binding site" evidence="1">
    <location>
        <position position="51"/>
    </location>
    <ligand>
        <name>a divalent metal cation</name>
        <dbReference type="ChEBI" id="CHEBI:60240"/>
        <label>7</label>
        <note>in cluster A</note>
    </ligand>
</feature>
<feature type="binding site" evidence="1">
    <location>
        <position position="59"/>
    </location>
    <ligand>
        <name>a divalent metal cation</name>
        <dbReference type="ChEBI" id="CHEBI:60240"/>
        <label>7</label>
        <note>in cluster A</note>
    </ligand>
</feature>
<feature type="binding site" evidence="1">
    <location>
        <position position="61"/>
    </location>
    <ligand>
        <name>a divalent metal cation</name>
        <dbReference type="ChEBI" id="CHEBI:60240"/>
        <label>7</label>
        <note>in cluster A</note>
    </ligand>
</feature>
<feature type="binding site" evidence="1">
    <location>
        <position position="62"/>
    </location>
    <ligand>
        <name>a divalent metal cation</name>
        <dbReference type="ChEBI" id="CHEBI:60240"/>
        <label>6</label>
        <note>in cluster A</note>
    </ligand>
</feature>
<feature type="binding site" evidence="1">
    <location>
        <position position="62"/>
    </location>
    <ligand>
        <name>a divalent metal cation</name>
        <dbReference type="ChEBI" id="CHEBI:60240"/>
        <label>7</label>
        <note>in cluster A</note>
    </ligand>
</feature>
<evidence type="ECO:0000250" key="1">
    <source>
        <dbReference type="UniProtKB" id="P02795"/>
    </source>
</evidence>
<evidence type="ECO:0000305" key="2"/>
<proteinExistence type="inferred from homology"/>